<comment type="function">
    <text evidence="4">Defense against chitin-containing fungal pathogens.</text>
</comment>
<comment type="catalytic activity">
    <reaction evidence="1">
        <text>Random endo-hydrolysis of N-acetyl-beta-D-glucosaminide (1-&gt;4)-beta-linkages in chitin and chitodextrins.</text>
        <dbReference type="EC" id="3.2.1.14"/>
    </reaction>
</comment>
<comment type="subcellular location">
    <subcellularLocation>
        <location evidence="2">Secreted</location>
        <location evidence="2">Cell wall</location>
    </subcellularLocation>
</comment>
<comment type="similarity">
    <text evidence="3">Belongs to the glycosyl hydrolase 19 family. Chitinase class I subfamily.</text>
</comment>
<accession>P86078</accession>
<dbReference type="EC" id="3.2.1.14"/>
<dbReference type="GO" id="GO:0005576">
    <property type="term" value="C:extracellular region"/>
    <property type="evidence" value="ECO:0007669"/>
    <property type="project" value="UniProtKB-KW"/>
</dbReference>
<dbReference type="GO" id="GO:0008843">
    <property type="term" value="F:endochitinase activity"/>
    <property type="evidence" value="ECO:0007669"/>
    <property type="project" value="UniProtKB-EC"/>
</dbReference>
<dbReference type="GO" id="GO:0006032">
    <property type="term" value="P:chitin catabolic process"/>
    <property type="evidence" value="ECO:0007669"/>
    <property type="project" value="UniProtKB-KW"/>
</dbReference>
<dbReference type="GO" id="GO:0006952">
    <property type="term" value="P:defense response"/>
    <property type="evidence" value="ECO:0007669"/>
    <property type="project" value="UniProtKB-KW"/>
</dbReference>
<dbReference type="GO" id="GO:0000272">
    <property type="term" value="P:polysaccharide catabolic process"/>
    <property type="evidence" value="ECO:0007669"/>
    <property type="project" value="UniProtKB-KW"/>
</dbReference>
<evidence type="ECO:0000250" key="1">
    <source>
        <dbReference type="UniProtKB" id="P80052"/>
    </source>
</evidence>
<evidence type="ECO:0000250" key="2">
    <source>
        <dbReference type="UniProtKB" id="P85484"/>
    </source>
</evidence>
<evidence type="ECO:0000255" key="3"/>
<evidence type="ECO:0000305" key="4"/>
<feature type="chain" id="PRO_0000362987" description="Endochitinase 1">
    <location>
        <begin position="1" status="less than"/>
        <end position="15" status="greater than"/>
    </location>
</feature>
<feature type="unsure residue" description="I or L">
    <location>
        <position position="2"/>
    </location>
</feature>
<feature type="unsure residue" description="F or M">
    <location>
        <position position="4"/>
    </location>
</feature>
<feature type="unsure residue" description="L or I">
    <location>
        <position position="7"/>
    </location>
</feature>
<feature type="unsure residue" description="I or L">
    <location>
        <position position="12"/>
    </location>
</feature>
<feature type="non-terminal residue">
    <location>
        <position position="1"/>
    </location>
</feature>
<feature type="non-terminal residue">
    <location>
        <position position="15"/>
    </location>
</feature>
<organism>
    <name type="scientific">Capsicum annuum var. annuum</name>
    <name type="common">Red pepper</name>
    <dbReference type="NCBI Taxonomy" id="40321"/>
    <lineage>
        <taxon>Eukaryota</taxon>
        <taxon>Viridiplantae</taxon>
        <taxon>Streptophyta</taxon>
        <taxon>Embryophyta</taxon>
        <taxon>Tracheophyta</taxon>
        <taxon>Spermatophyta</taxon>
        <taxon>Magnoliopsida</taxon>
        <taxon>eudicotyledons</taxon>
        <taxon>Gunneridae</taxon>
        <taxon>Pentapetalae</taxon>
        <taxon>asterids</taxon>
        <taxon>lamiids</taxon>
        <taxon>Solanales</taxon>
        <taxon>Solanaceae</taxon>
        <taxon>Solanoideae</taxon>
        <taxon>Capsiceae</taxon>
        <taxon>Capsicum</taxon>
    </lineage>
</organism>
<proteinExistence type="evidence at protein level"/>
<name>CHI1_CAPAA</name>
<reference evidence="4" key="1">
    <citation type="submission" date="2008-07" db="UniProtKB">
        <authorList>
            <person name="Belchi-Navarro S."/>
            <person name="Almagro L."/>
            <person name="Pedreno M.A."/>
        </authorList>
    </citation>
    <scope>PROTEIN SEQUENCE</scope>
</reference>
<keyword id="KW-0119">Carbohydrate metabolism</keyword>
<keyword id="KW-0134">Cell wall</keyword>
<keyword id="KW-0146">Chitin degradation</keyword>
<keyword id="KW-0903">Direct protein sequencing</keyword>
<keyword id="KW-0326">Glycosidase</keyword>
<keyword id="KW-0378">Hydrolase</keyword>
<keyword id="KW-0611">Plant defense</keyword>
<keyword id="KW-0624">Polysaccharide degradation</keyword>
<keyword id="KW-0964">Secreted</keyword>
<protein>
    <recommendedName>
        <fullName evidence="1">Endochitinase 1</fullName>
        <ecNumber>3.2.1.14</ecNumber>
    </recommendedName>
</protein>
<sequence length="15" mass="1589">SIGFDGLNDPDIVAR</sequence>